<accession>M1LL92</accession>
<name>UNG_MONPV</name>
<reference key="1">
    <citation type="journal article" date="2013" name="Am. J. Trop. Med. Hyg.">
        <title>Detection of human monkeypox in the republic of the congo following intensive community education.</title>
        <authorList>
            <person name="Reynolds M.G."/>
            <person name="Emerson G.L."/>
            <person name="Pukuta E."/>
            <person name="Karhemere S."/>
            <person name="Muyembe J.J."/>
            <person name="Bikindou A."/>
            <person name="McCollum A.M."/>
            <person name="Moses C."/>
            <person name="Wilkins K."/>
            <person name="Zhao H."/>
            <person name="Damon I.K."/>
            <person name="Karem K.L."/>
            <person name="Li Y."/>
            <person name="Carroll D.S."/>
            <person name="Mombouli J.V."/>
        </authorList>
    </citation>
    <scope>NUCLEOTIDE SEQUENCE [LARGE SCALE GENOMIC DNA]</scope>
    <source>
        <strain>ROC2010</strain>
    </source>
</reference>
<reference key="2">
    <citation type="journal article" date="2022" name="J. Infect. Dis.">
        <title>Exportation of Monkeypox virus from the African continent.</title>
        <authorList>
            <person name="Mauldin M.R."/>
            <person name="McCollum A.M."/>
            <person name="Nakazawa Y.J."/>
            <person name="Mandra A."/>
            <person name="Whitehouse E.R."/>
            <person name="Davidson W."/>
            <person name="Zhao H."/>
            <person name="Gao J."/>
            <person name="Li Y."/>
            <person name="Doty J."/>
            <person name="Yinka-Ogunleye A."/>
            <person name="Akinpelu A."/>
            <person name="Aruna O."/>
            <person name="Naidoo D."/>
            <person name="Lewandowski K."/>
            <person name="Afrough B."/>
            <person name="Graham V."/>
            <person name="Aarons E."/>
            <person name="Hewson R."/>
            <person name="Vipond R."/>
            <person name="Dunning J."/>
            <person name="Chand M."/>
            <person name="Brown C."/>
            <person name="Cohen-Gihon I."/>
            <person name="Erez N."/>
            <person name="Shifman O."/>
            <person name="Israeli O."/>
            <person name="Sharon M."/>
            <person name="Schwartz E."/>
            <person name="Beth-Din A."/>
            <person name="Zvi A."/>
            <person name="Mak T.M."/>
            <person name="Ng Y.K."/>
            <person name="Cui L."/>
            <person name="Lin R.T.P."/>
            <person name="Olson V.A."/>
            <person name="Brooks T."/>
            <person name="Paran N."/>
            <person name="Ihekweazu C."/>
            <person name="Reynolds M.G."/>
        </authorList>
    </citation>
    <scope>NUCLEOTIDE SEQUENCE [LARGE SCALE GENOMIC DNA]</scope>
    <source>
        <strain>MPXV-M5312_HM12_Rivers</strain>
    </source>
</reference>
<evidence type="ECO:0000250" key="1">
    <source>
        <dbReference type="UniProtKB" id="P04303"/>
    </source>
</evidence>
<evidence type="ECO:0000305" key="2"/>
<evidence type="ECO:0007829" key="3">
    <source>
        <dbReference type="PDB" id="8HG1"/>
    </source>
</evidence>
<evidence type="ECO:0007829" key="4">
    <source>
        <dbReference type="PDB" id="8HOY"/>
    </source>
</evidence>
<evidence type="ECO:0007829" key="5">
    <source>
        <dbReference type="PDB" id="8WPE"/>
    </source>
</evidence>
<evidence type="ECO:0007829" key="6">
    <source>
        <dbReference type="PDB" id="8WPF"/>
    </source>
</evidence>
<evidence type="ECO:0007829" key="7">
    <source>
        <dbReference type="PDB" id="8WPK"/>
    </source>
</evidence>
<protein>
    <recommendedName>
        <fullName>Uracil-DNA glycosylase</fullName>
        <shortName>UDG</shortName>
        <ecNumber evidence="1">3.2.2.27</ecNumber>
    </recommendedName>
</protein>
<comment type="function">
    <text evidence="1">Plays an essential role in viral replication as a component of the DNA polymerase processivity factor. Excises uracil residues from the DNA which can arise as a result of misincorporation of dUMP residues by DNA polymerase or due to deamination of cytosine.</text>
</comment>
<comment type="catalytic activity">
    <reaction evidence="1">
        <text>Hydrolyzes single-stranded DNA or mismatched double-stranded DNA and polynucleotides, releasing free uracil.</text>
        <dbReference type="EC" id="3.2.2.27"/>
    </reaction>
</comment>
<comment type="subunit">
    <text evidence="1">Homodimer. Interacts with protein OPG148. Component of the Uracil-DNA glycosylase(UDG)-OPG148-polymerase complex; OPG148 and UDG form a heterodimeric processivity factor that associates with OPG71 to form the processive polymerase holoenzyme.</text>
</comment>
<comment type="similarity">
    <text evidence="2">Belongs to the uracil-DNA glycosylase (UDG) superfamily. UNG family.</text>
</comment>
<feature type="chain" id="PRO_0000457387" description="Uracil-DNA glycosylase">
    <location>
        <begin position="1"/>
        <end position="218"/>
    </location>
</feature>
<feature type="strand" evidence="5">
    <location>
        <begin position="3"/>
        <end position="5"/>
    </location>
</feature>
<feature type="strand" evidence="6">
    <location>
        <begin position="7"/>
        <end position="10"/>
    </location>
</feature>
<feature type="strand" evidence="5">
    <location>
        <begin position="11"/>
        <end position="14"/>
    </location>
</feature>
<feature type="helix" evidence="5">
    <location>
        <begin position="17"/>
        <end position="22"/>
    </location>
</feature>
<feature type="helix" evidence="5">
    <location>
        <begin position="23"/>
        <end position="37"/>
    </location>
</feature>
<feature type="strand" evidence="5">
    <location>
        <begin position="42"/>
        <end position="44"/>
    </location>
</feature>
<feature type="helix" evidence="5">
    <location>
        <begin position="46"/>
        <end position="48"/>
    </location>
</feature>
<feature type="helix" evidence="3">
    <location>
        <begin position="52"/>
        <end position="54"/>
    </location>
</feature>
<feature type="strand" evidence="5">
    <location>
        <begin position="57"/>
        <end position="59"/>
    </location>
</feature>
<feature type="strand" evidence="5">
    <location>
        <begin position="62"/>
        <end position="68"/>
    </location>
</feature>
<feature type="strand" evidence="7">
    <location>
        <begin position="71"/>
        <end position="73"/>
    </location>
</feature>
<feature type="strand" evidence="3">
    <location>
        <begin position="76"/>
        <end position="79"/>
    </location>
</feature>
<feature type="strand" evidence="4">
    <location>
        <begin position="82"/>
        <end position="84"/>
    </location>
</feature>
<feature type="helix" evidence="5">
    <location>
        <begin position="87"/>
        <end position="100"/>
    </location>
</feature>
<feature type="strand" evidence="5">
    <location>
        <begin position="106"/>
        <end position="108"/>
    </location>
</feature>
<feature type="strand" evidence="5">
    <location>
        <begin position="110"/>
        <end position="113"/>
    </location>
</feature>
<feature type="strand" evidence="5">
    <location>
        <begin position="116"/>
        <end position="123"/>
    </location>
</feature>
<feature type="turn" evidence="5">
    <location>
        <begin position="130"/>
        <end position="133"/>
    </location>
</feature>
<feature type="helix" evidence="5">
    <location>
        <begin position="134"/>
        <end position="151"/>
    </location>
</feature>
<feature type="strand" evidence="5">
    <location>
        <begin position="153"/>
        <end position="158"/>
    </location>
</feature>
<feature type="turn" evidence="5">
    <location>
        <begin position="160"/>
        <end position="165"/>
    </location>
</feature>
<feature type="helix" evidence="5">
    <location>
        <begin position="166"/>
        <end position="169"/>
    </location>
</feature>
<feature type="strand" evidence="5">
    <location>
        <begin position="175"/>
        <end position="179"/>
    </location>
</feature>
<feature type="turn" evidence="4">
    <location>
        <begin position="182"/>
        <end position="184"/>
    </location>
</feature>
<feature type="helix" evidence="5">
    <location>
        <begin position="185"/>
        <end position="187"/>
    </location>
</feature>
<feature type="helix" evidence="5">
    <location>
        <begin position="188"/>
        <end position="191"/>
    </location>
</feature>
<feature type="helix" evidence="5">
    <location>
        <begin position="194"/>
        <end position="204"/>
    </location>
</feature>
<feature type="helix" evidence="5">
    <location>
        <begin position="212"/>
        <end position="215"/>
    </location>
</feature>
<organism>
    <name type="scientific">Monkeypox virus</name>
    <dbReference type="NCBI Taxonomy" id="10244"/>
    <lineage>
        <taxon>Viruses</taxon>
        <taxon>Varidnaviria</taxon>
        <taxon>Bamfordvirae</taxon>
        <taxon>Nucleocytoviricota</taxon>
        <taxon>Pokkesviricetes</taxon>
        <taxon>Chitovirales</taxon>
        <taxon>Poxviridae</taxon>
        <taxon>Chordopoxvirinae</taxon>
        <taxon>Orthopoxvirus</taxon>
    </lineage>
</organism>
<proteinExistence type="evidence at protein level"/>
<keyword id="KW-0002">3D-structure</keyword>
<keyword id="KW-0227">DNA damage</keyword>
<keyword id="KW-0234">DNA repair</keyword>
<keyword id="KW-0238">DNA-binding</keyword>
<keyword id="KW-0378">Hydrolase</keyword>
<keyword id="KW-1185">Reference proteome</keyword>
<sequence length="218" mass="25077">MNSVTISHAPYTITYHDDWEPVMSQLVEFYNEVASWLLRDETSPIPDKFFIQLKQPLRNKRVCVCGIDPYPKDGTGVPFESPNFTKKSIKEIASSISRLTGVIDYKGYNLNIIDGVIPWNYYLSCKLGETKSHAIYWDKISKLLLQHITKHVSVLYCLGKTDFSNIRAKLESPVTTIVGYHPAARDHQFEKDRSFEIINVLLELDNKTPINWAQGFIY</sequence>
<dbReference type="EC" id="3.2.2.27" evidence="1"/>
<dbReference type="EMBL" id="KC257461">
    <property type="protein sequence ID" value="AGF37005.1"/>
    <property type="molecule type" value="Genomic_DNA"/>
</dbReference>
<dbReference type="EMBL" id="MT903340">
    <property type="protein sequence ID" value="QNP12971.1"/>
    <property type="molecule type" value="Genomic_DNA"/>
</dbReference>
<dbReference type="RefSeq" id="NP_536528.1">
    <property type="nucleotide sequence ID" value="NC_003310.1"/>
</dbReference>
<dbReference type="RefSeq" id="YP_010377098.1">
    <property type="nucleotide sequence ID" value="NC_063383.1"/>
</dbReference>
<dbReference type="PDB" id="8HDZ">
    <property type="method" value="EM"/>
    <property type="resolution" value="3.05 A"/>
    <property type="chains" value="B=1-218"/>
</dbReference>
<dbReference type="PDB" id="8HG1">
    <property type="method" value="EM"/>
    <property type="resolution" value="2.80 A"/>
    <property type="chains" value="B=1-218"/>
</dbReference>
<dbReference type="PDB" id="8HLZ">
    <property type="method" value="EM"/>
    <property type="resolution" value="3.50 A"/>
    <property type="chains" value="B/E=1-218"/>
</dbReference>
<dbReference type="PDB" id="8HM0">
    <property type="method" value="EM"/>
    <property type="resolution" value="3.10 A"/>
    <property type="chains" value="B=1-218"/>
</dbReference>
<dbReference type="PDB" id="8HOY">
    <property type="method" value="EM"/>
    <property type="resolution" value="2.76 A"/>
    <property type="chains" value="B=1-218"/>
</dbReference>
<dbReference type="PDB" id="8HPA">
    <property type="method" value="EM"/>
    <property type="resolution" value="3.01 A"/>
    <property type="chains" value="B=1-218"/>
</dbReference>
<dbReference type="PDB" id="8J86">
    <property type="method" value="EM"/>
    <property type="resolution" value="3.22 A"/>
    <property type="chains" value="B=1-218"/>
</dbReference>
<dbReference type="PDB" id="8K8S">
    <property type="method" value="EM"/>
    <property type="resolution" value="3.06 A"/>
    <property type="chains" value="B=1-218"/>
</dbReference>
<dbReference type="PDB" id="8K8U">
    <property type="method" value="EM"/>
    <property type="resolution" value="3.05 A"/>
    <property type="chains" value="B=1-218"/>
</dbReference>
<dbReference type="PDB" id="8WPE">
    <property type="method" value="EM"/>
    <property type="resolution" value="2.70 A"/>
    <property type="chains" value="C=1-218"/>
</dbReference>
<dbReference type="PDB" id="8WPF">
    <property type="method" value="EM"/>
    <property type="resolution" value="3.00 A"/>
    <property type="chains" value="C=1-218"/>
</dbReference>
<dbReference type="PDB" id="8WPK">
    <property type="method" value="EM"/>
    <property type="resolution" value="2.70 A"/>
    <property type="chains" value="C=1-218"/>
</dbReference>
<dbReference type="PDB" id="8WPP">
    <property type="method" value="EM"/>
    <property type="resolution" value="3.10 A"/>
    <property type="chains" value="C=1-218"/>
</dbReference>
<dbReference type="PDBsum" id="8HDZ"/>
<dbReference type="PDBsum" id="8HG1"/>
<dbReference type="PDBsum" id="8HLZ"/>
<dbReference type="PDBsum" id="8HM0"/>
<dbReference type="PDBsum" id="8HOY"/>
<dbReference type="PDBsum" id="8HPA"/>
<dbReference type="PDBsum" id="8J86"/>
<dbReference type="PDBsum" id="8K8S"/>
<dbReference type="PDBsum" id="8K8U"/>
<dbReference type="PDBsum" id="8WPE"/>
<dbReference type="PDBsum" id="8WPF"/>
<dbReference type="PDBsum" id="8WPK"/>
<dbReference type="PDBsum" id="8WPP"/>
<dbReference type="EMDB" id="EMD-36960"/>
<dbReference type="EMDB" id="EMD-36962"/>
<dbReference type="EMDB" id="EMD-37714"/>
<dbReference type="EMDB" id="EMD-37715"/>
<dbReference type="EMDB" id="EMD-37717"/>
<dbReference type="EMDB" id="EMD-37722"/>
<dbReference type="SMR" id="M1LL92"/>
<dbReference type="GeneID" id="72551511"/>
<dbReference type="GeneID" id="929066"/>
<dbReference type="KEGG" id="vg:929066"/>
<dbReference type="Proteomes" id="UP000516359">
    <property type="component" value="Genome"/>
</dbReference>
<dbReference type="GO" id="GO:0003677">
    <property type="term" value="F:DNA binding"/>
    <property type="evidence" value="ECO:0007669"/>
    <property type="project" value="UniProtKB-KW"/>
</dbReference>
<dbReference type="GO" id="GO:0016799">
    <property type="term" value="F:hydrolase activity, hydrolyzing N-glycosyl compounds"/>
    <property type="evidence" value="ECO:0007669"/>
    <property type="project" value="InterPro"/>
</dbReference>
<dbReference type="GO" id="GO:0006281">
    <property type="term" value="P:DNA repair"/>
    <property type="evidence" value="ECO:0007669"/>
    <property type="project" value="UniProtKB-KW"/>
</dbReference>
<dbReference type="CDD" id="cd19372">
    <property type="entry name" value="UDG_F1_VAVC_D4-like"/>
    <property type="match status" value="1"/>
</dbReference>
<dbReference type="Gene3D" id="3.40.470.10">
    <property type="entry name" value="Uracil-DNA glycosylase-like domain"/>
    <property type="match status" value="1"/>
</dbReference>
<dbReference type="InterPro" id="IPR018085">
    <property type="entry name" value="Ura-DNA_Glyclase_AS"/>
</dbReference>
<dbReference type="InterPro" id="IPR036895">
    <property type="entry name" value="Uracil-DNA_glycosylase-like_sf"/>
</dbReference>
<dbReference type="SUPFAM" id="SSF52141">
    <property type="entry name" value="Uracil-DNA glycosylase-like"/>
    <property type="match status" value="1"/>
</dbReference>
<dbReference type="PROSITE" id="PS00130">
    <property type="entry name" value="U_DNA_GLYCOSYLASE"/>
    <property type="match status" value="1"/>
</dbReference>
<organismHost>
    <name type="scientific">Cynomys gunnisoni</name>
    <name type="common">Gunnison's prairie dog</name>
    <name type="synonym">Spermophilus gunnisoni</name>
    <dbReference type="NCBI Taxonomy" id="45479"/>
</organismHost>
<organismHost>
    <name type="scientific">Cynomys leucurus</name>
    <name type="common">White-tailed prairie dog</name>
    <dbReference type="NCBI Taxonomy" id="99825"/>
</organismHost>
<organismHost>
    <name type="scientific">Cynomys ludovicianus</name>
    <name type="common">Black-tailed prairie dog</name>
    <dbReference type="NCBI Taxonomy" id="45480"/>
</organismHost>
<organismHost>
    <name type="scientific">Cynomys mexicanus</name>
    <name type="common">Mexican prairie dog</name>
    <dbReference type="NCBI Taxonomy" id="99826"/>
</organismHost>
<organismHost>
    <name type="scientific">Cynomys parvidens</name>
    <name type="common">Utah prairie dog</name>
    <dbReference type="NCBI Taxonomy" id="99827"/>
</organismHost>
<organismHost>
    <name type="scientific">Gliridae</name>
    <name type="common">dormice</name>
    <dbReference type="NCBI Taxonomy" id="30650"/>
</organismHost>
<organismHost>
    <name type="scientific">Heliosciurus ruwenzorii</name>
    <name type="common">Ruwenzori sun squirrel</name>
    <dbReference type="NCBI Taxonomy" id="226685"/>
</organismHost>
<organismHost>
    <name type="scientific">Homo sapiens</name>
    <name type="common">Human</name>
    <dbReference type="NCBI Taxonomy" id="9606"/>
</organismHost>
<organismHost>
    <name type="scientific">Mus musculus</name>
    <name type="common">Mouse</name>
    <dbReference type="NCBI Taxonomy" id="10090"/>
</organismHost>
<gene>
    <name type="primary">OPG116</name>
    <name type="synonym">UNG</name>
    <name type="ORF">MPXVgp099</name>
</gene>